<keyword id="KW-0067">ATP-binding</keyword>
<keyword id="KW-0547">Nucleotide-binding</keyword>
<keyword id="KW-0611">Plant defense</keyword>
<keyword id="KW-1185">Reference proteome</keyword>
<organism>
    <name type="scientific">Arabidopsis thaliana</name>
    <name type="common">Mouse-ear cress</name>
    <dbReference type="NCBI Taxonomy" id="3702"/>
    <lineage>
        <taxon>Eukaryota</taxon>
        <taxon>Viridiplantae</taxon>
        <taxon>Streptophyta</taxon>
        <taxon>Embryophyta</taxon>
        <taxon>Tracheophyta</taxon>
        <taxon>Spermatophyta</taxon>
        <taxon>Magnoliopsida</taxon>
        <taxon>eudicotyledons</taxon>
        <taxon>Gunneridae</taxon>
        <taxon>Pentapetalae</taxon>
        <taxon>rosids</taxon>
        <taxon>malvids</taxon>
        <taxon>Brassicales</taxon>
        <taxon>Brassicaceae</taxon>
        <taxon>Camelineae</taxon>
        <taxon>Arabidopsis</taxon>
    </lineage>
</organism>
<gene>
    <name type="ordered locus">At1g52660</name>
    <name type="ORF">F6D8.12</name>
</gene>
<accession>Q9SSR8</accession>
<accession>F4IEJ2</accession>
<reference key="1">
    <citation type="journal article" date="2000" name="Nature">
        <title>Sequence and analysis of chromosome 1 of the plant Arabidopsis thaliana.</title>
        <authorList>
            <person name="Theologis A."/>
            <person name="Ecker J.R."/>
            <person name="Palm C.J."/>
            <person name="Federspiel N.A."/>
            <person name="Kaul S."/>
            <person name="White O."/>
            <person name="Alonso J."/>
            <person name="Altafi H."/>
            <person name="Araujo R."/>
            <person name="Bowman C.L."/>
            <person name="Brooks S.Y."/>
            <person name="Buehler E."/>
            <person name="Chan A."/>
            <person name="Chao Q."/>
            <person name="Chen H."/>
            <person name="Cheuk R.F."/>
            <person name="Chin C.W."/>
            <person name="Chung M.K."/>
            <person name="Conn L."/>
            <person name="Conway A.B."/>
            <person name="Conway A.R."/>
            <person name="Creasy T.H."/>
            <person name="Dewar K."/>
            <person name="Dunn P."/>
            <person name="Etgu P."/>
            <person name="Feldblyum T.V."/>
            <person name="Feng J.-D."/>
            <person name="Fong B."/>
            <person name="Fujii C.Y."/>
            <person name="Gill J.E."/>
            <person name="Goldsmith A.D."/>
            <person name="Haas B."/>
            <person name="Hansen N.F."/>
            <person name="Hughes B."/>
            <person name="Huizar L."/>
            <person name="Hunter J.L."/>
            <person name="Jenkins J."/>
            <person name="Johnson-Hopson C."/>
            <person name="Khan S."/>
            <person name="Khaykin E."/>
            <person name="Kim C.J."/>
            <person name="Koo H.L."/>
            <person name="Kremenetskaia I."/>
            <person name="Kurtz D.B."/>
            <person name="Kwan A."/>
            <person name="Lam B."/>
            <person name="Langin-Hooper S."/>
            <person name="Lee A."/>
            <person name="Lee J.M."/>
            <person name="Lenz C.A."/>
            <person name="Li J.H."/>
            <person name="Li Y.-P."/>
            <person name="Lin X."/>
            <person name="Liu S.X."/>
            <person name="Liu Z.A."/>
            <person name="Luros J.S."/>
            <person name="Maiti R."/>
            <person name="Marziali A."/>
            <person name="Militscher J."/>
            <person name="Miranda M."/>
            <person name="Nguyen M."/>
            <person name="Nierman W.C."/>
            <person name="Osborne B.I."/>
            <person name="Pai G."/>
            <person name="Peterson J."/>
            <person name="Pham P.K."/>
            <person name="Rizzo M."/>
            <person name="Rooney T."/>
            <person name="Rowley D."/>
            <person name="Sakano H."/>
            <person name="Salzberg S.L."/>
            <person name="Schwartz J.R."/>
            <person name="Shinn P."/>
            <person name="Southwick A.M."/>
            <person name="Sun H."/>
            <person name="Tallon L.J."/>
            <person name="Tambunga G."/>
            <person name="Toriumi M.J."/>
            <person name="Town C.D."/>
            <person name="Utterback T."/>
            <person name="Van Aken S."/>
            <person name="Vaysberg M."/>
            <person name="Vysotskaia V.S."/>
            <person name="Walker M."/>
            <person name="Wu D."/>
            <person name="Yu G."/>
            <person name="Fraser C.M."/>
            <person name="Venter J.C."/>
            <person name="Davis R.W."/>
        </authorList>
    </citation>
    <scope>NUCLEOTIDE SEQUENCE [LARGE SCALE GENOMIC DNA]</scope>
    <source>
        <strain>cv. Columbia</strain>
    </source>
</reference>
<reference key="2">
    <citation type="journal article" date="2017" name="Plant J.">
        <title>Araport11: a complete reannotation of the Arabidopsis thaliana reference genome.</title>
        <authorList>
            <person name="Cheng C.Y."/>
            <person name="Krishnakumar V."/>
            <person name="Chan A.P."/>
            <person name="Thibaud-Nissen F."/>
            <person name="Schobel S."/>
            <person name="Town C.D."/>
        </authorList>
    </citation>
    <scope>GENOME REANNOTATION</scope>
    <source>
        <strain>cv. Columbia</strain>
    </source>
</reference>
<name>DRL6_ARATH</name>
<dbReference type="EMBL" id="AC008016">
    <property type="protein sequence ID" value="AAD55599.1"/>
    <property type="molecule type" value="Genomic_DNA"/>
</dbReference>
<dbReference type="EMBL" id="CP002684">
    <property type="protein sequence ID" value="AEE32835.1"/>
    <property type="status" value="ALT_SEQ"/>
    <property type="molecule type" value="Genomic_DNA"/>
</dbReference>
<dbReference type="EMBL" id="CP002684">
    <property type="protein sequence ID" value="ANM58115.1"/>
    <property type="molecule type" value="Genomic_DNA"/>
</dbReference>
<dbReference type="PIR" id="E96567">
    <property type="entry name" value="E96567"/>
</dbReference>
<dbReference type="RefSeq" id="NP_001320574.1">
    <property type="nucleotide sequence ID" value="NM_001333556.1"/>
</dbReference>
<dbReference type="RefSeq" id="NP_175675.4">
    <property type="nucleotide sequence ID" value="NM_104144.5"/>
</dbReference>
<dbReference type="SMR" id="Q9SSR8"/>
<dbReference type="STRING" id="3702.Q9SSR8"/>
<dbReference type="MetOSite" id="Q9SSR8"/>
<dbReference type="PaxDb" id="3702-AT1G52660.1"/>
<dbReference type="EnsemblPlants" id="AT1G52660.2">
    <property type="protein sequence ID" value="AT1G52660.2"/>
    <property type="gene ID" value="AT1G52660"/>
</dbReference>
<dbReference type="GeneID" id="841698"/>
<dbReference type="Gramene" id="AT1G52660.2">
    <property type="protein sequence ID" value="AT1G52660.2"/>
    <property type="gene ID" value="AT1G52660"/>
</dbReference>
<dbReference type="KEGG" id="ath:AT1G52660"/>
<dbReference type="Araport" id="AT1G52660"/>
<dbReference type="TAIR" id="AT1G52660"/>
<dbReference type="eggNOG" id="KOG4658">
    <property type="taxonomic scope" value="Eukaryota"/>
</dbReference>
<dbReference type="HOGENOM" id="CLU_000427_1_2_1"/>
<dbReference type="InParanoid" id="Q9SSR8"/>
<dbReference type="OrthoDB" id="664960at2759"/>
<dbReference type="PhylomeDB" id="Q9SSR8"/>
<dbReference type="PRO" id="PR:Q9SSR8"/>
<dbReference type="Proteomes" id="UP000006548">
    <property type="component" value="Chromosome 1"/>
</dbReference>
<dbReference type="ExpressionAtlas" id="Q9SSR8">
    <property type="expression patterns" value="baseline and differential"/>
</dbReference>
<dbReference type="GO" id="GO:0043531">
    <property type="term" value="F:ADP binding"/>
    <property type="evidence" value="ECO:0007669"/>
    <property type="project" value="InterPro"/>
</dbReference>
<dbReference type="GO" id="GO:0005524">
    <property type="term" value="F:ATP binding"/>
    <property type="evidence" value="ECO:0007669"/>
    <property type="project" value="UniProtKB-KW"/>
</dbReference>
<dbReference type="GO" id="GO:0006952">
    <property type="term" value="P:defense response"/>
    <property type="evidence" value="ECO:0007669"/>
    <property type="project" value="UniProtKB-KW"/>
</dbReference>
<dbReference type="FunFam" id="3.40.50.300:FF:001091">
    <property type="entry name" value="Probable disease resistance protein At1g61300"/>
    <property type="match status" value="1"/>
</dbReference>
<dbReference type="FunFam" id="1.10.8.430:FF:000003">
    <property type="entry name" value="Probable disease resistance protein At5g66910"/>
    <property type="match status" value="1"/>
</dbReference>
<dbReference type="Gene3D" id="1.10.8.430">
    <property type="entry name" value="Helical domain of apoptotic protease-activating factors"/>
    <property type="match status" value="1"/>
</dbReference>
<dbReference type="Gene3D" id="3.40.50.300">
    <property type="entry name" value="P-loop containing nucleotide triphosphate hydrolases"/>
    <property type="match status" value="1"/>
</dbReference>
<dbReference type="InterPro" id="IPR042197">
    <property type="entry name" value="Apaf_helical"/>
</dbReference>
<dbReference type="InterPro" id="IPR002182">
    <property type="entry name" value="NB-ARC"/>
</dbReference>
<dbReference type="InterPro" id="IPR027417">
    <property type="entry name" value="P-loop_NTPase"/>
</dbReference>
<dbReference type="InterPro" id="IPR050905">
    <property type="entry name" value="Plant_NBS-LRR"/>
</dbReference>
<dbReference type="PANTHER" id="PTHR33463:SF220">
    <property type="entry name" value="NB-ARC DOMAIN-CONTAINING PROTEIN"/>
    <property type="match status" value="1"/>
</dbReference>
<dbReference type="PANTHER" id="PTHR33463">
    <property type="entry name" value="NB-ARC DOMAIN-CONTAINING PROTEIN-RELATED"/>
    <property type="match status" value="1"/>
</dbReference>
<dbReference type="Pfam" id="PF00931">
    <property type="entry name" value="NB-ARC"/>
    <property type="match status" value="1"/>
</dbReference>
<dbReference type="PRINTS" id="PR00364">
    <property type="entry name" value="DISEASERSIST"/>
</dbReference>
<dbReference type="SUPFAM" id="SSF52540">
    <property type="entry name" value="P-loop containing nucleoside triphosphate hydrolases"/>
    <property type="match status" value="1"/>
</dbReference>
<evidence type="ECO:0000250" key="1"/>
<evidence type="ECO:0000255" key="2"/>
<evidence type="ECO:0000305" key="3"/>
<comment type="function">
    <text evidence="1">Possible disease resistance protein.</text>
</comment>
<comment type="caution">
    <text evidence="3">Although strongly related to the NB-LRR family, it is shorter and lacks the LRR repeats that are present in other proteins of the family.</text>
</comment>
<comment type="sequence caution" evidence="3">
    <conflict type="erroneous gene model prediction">
        <sequence resource="EMBL-CDS" id="AEE32835"/>
    </conflict>
</comment>
<comment type="online information" name="NIB-LRRS">
    <link uri="http://niblrrs.ucdavis.edu"/>
    <text>Functional and comparative genomics of disease resistance gene homologs</text>
</comment>
<proteinExistence type="inferred from homology"/>
<protein>
    <recommendedName>
        <fullName>Probable disease resistance protein At1g52660</fullName>
    </recommendedName>
</protein>
<sequence>MGKDFKSLVTRCIYVGKMNDNAKKLKIATEELKDLGNNVMKRVKLCEEQQQMKRLDKVQTWLRQADTVIKEAEEYFLMSSSSSSSGLISSSHKMEKKICKKLKEVQEIKSRGMFEVVAESTGGIGGGAGGGLTIKDSDEQTIGLEAVSGLVWRCLTMENTGIIGLYGVEGVGKTTVLTQVNNRLLQQKANGFDFVLWVFVSKNLNLQKIQDTIREKIGFLDRTWTSKSEEEKAAKIFEILSKRRFALFLDDVWEKVDLVKAGVPPPDAQNRSKIVFTTCSEEVCKEMSAQTKIKVEKLAWERAWDLFKKNVGEDTIKSHPDIAKVAQEVAARCDGLPLALVTIGRAMASKKTPQEWRDALYILSNSPPNFSGQIS</sequence>
<feature type="chain" id="PRO_0000212738" description="Probable disease resistance protein At1g52660">
    <location>
        <begin position="1"/>
        <end position="375"/>
    </location>
</feature>
<feature type="domain" description="NB-ARC">
    <location>
        <begin position="158"/>
        <end position="372"/>
    </location>
</feature>
<feature type="binding site" evidence="2">
    <location>
        <begin position="167"/>
        <end position="174"/>
    </location>
    <ligand>
        <name>ATP</name>
        <dbReference type="ChEBI" id="CHEBI:30616"/>
    </ligand>
</feature>